<protein>
    <recommendedName>
        <fullName>Putative antiporter subunit mnhA2</fullName>
    </recommendedName>
    <alternativeName>
        <fullName>Mrp complex subunit A2</fullName>
    </alternativeName>
    <alternativeName>
        <fullName>Putative NADH-ubiquinone oxidoreductase subunit mnhA2</fullName>
    </alternativeName>
</protein>
<gene>
    <name type="primary">mnhA2</name>
    <name type="synonym">mrpA2</name>
    <name type="ordered locus">SAHV_0619</name>
</gene>
<sequence>MSLVYLLIAILVIMAMILLMSKRRALAKYAGYIALVAPVISSIYFLIQIPSVAKLQYLSTSIPWIKTLDINLDLRLDGLSLMFSLIISLIGIAVFFYATQYLSSRKDNLPRFYFYLTLFMFSMIGIVLSDNTILMYIFWELTSVSSFLLISYWYNNGDSQFGAIQSFMITVFGGLALLVGFIMLYIMTGTNNITDILGQADHIKNHGLFIPMIFMFLLGAFTKSAQFPFHIWLPRAMAAPTPVSAYLHSATMVKAGIFLLLRFTPLLGLSNMYIYIVTFVGLITMLFGSITALKQWDLKGILAYSTISQLGMIMAMVGIGGGYAQHQQDAIASIYVFVLFGALFHLMNHAIFKCALFMGVGILDHEAGSRDIRILSGMRQLFPKMNLVMTIAALSMAGVPFLNGFLSKEMFLDALTQTGQLSQFSLISMIAIVFVGVIASIFTFTYALYMVKEVFWTKYDSKVFTKKNIHEPWLFSLPSLILMVLVPVIFFVPNIFGKGIIVPALRGVSGGNHQIDPLAPHVSQWHGFNIPLLLTIIIILLGSVLAIKVDWKKVFTGKIRQISVSKGYEMVYRHFEKFATKRFKRVMQDRLNQYIIMTLGIFMIIIGYGYIRIGLPKVHQLHVSEFGALEIILAIVTVTIGISLIFIRQRLTMVILNGVIGFVVTLFFIAMKAPDLALTQLVVETITTILFIVSFSRLPNVPRSNANKKREIIKISVSLLMALIVVSLIFITQQTDGLSSISDFYLKADKLTGGKNIVNAILGDFRALDTLFEGLVLIITGLGIYTLLNYQDRRGQDERE</sequence>
<evidence type="ECO:0000250" key="1"/>
<evidence type="ECO:0000255" key="2"/>
<evidence type="ECO:0000305" key="3"/>
<accession>A7WZ76</accession>
<reference key="1">
    <citation type="journal article" date="2008" name="Antimicrob. Agents Chemother.">
        <title>Mutated response regulator graR is responsible for phenotypic conversion of Staphylococcus aureus from heterogeneous vancomycin-intermediate resistance to vancomycin-intermediate resistance.</title>
        <authorList>
            <person name="Neoh H.-M."/>
            <person name="Cui L."/>
            <person name="Yuzawa H."/>
            <person name="Takeuchi F."/>
            <person name="Matsuo M."/>
            <person name="Hiramatsu K."/>
        </authorList>
    </citation>
    <scope>NUCLEOTIDE SEQUENCE [LARGE SCALE GENOMIC DNA]</scope>
    <source>
        <strain>Mu3 / ATCC 700698</strain>
    </source>
</reference>
<organism>
    <name type="scientific">Staphylococcus aureus (strain Mu3 / ATCC 700698)</name>
    <dbReference type="NCBI Taxonomy" id="418127"/>
    <lineage>
        <taxon>Bacteria</taxon>
        <taxon>Bacillati</taxon>
        <taxon>Bacillota</taxon>
        <taxon>Bacilli</taxon>
        <taxon>Bacillales</taxon>
        <taxon>Staphylococcaceae</taxon>
        <taxon>Staphylococcus</taxon>
    </lineage>
</organism>
<proteinExistence type="inferred from homology"/>
<feature type="chain" id="PRO_0000372290" description="Putative antiporter subunit mnhA2">
    <location>
        <begin position="1"/>
        <end position="800"/>
    </location>
</feature>
<feature type="transmembrane region" description="Helical" evidence="2">
    <location>
        <begin position="1"/>
        <end position="21"/>
    </location>
</feature>
<feature type="transmembrane region" description="Helical" evidence="2">
    <location>
        <begin position="33"/>
        <end position="53"/>
    </location>
</feature>
<feature type="transmembrane region" description="Helical" evidence="2">
    <location>
        <begin position="78"/>
        <end position="98"/>
    </location>
</feature>
<feature type="transmembrane region" description="Helical" evidence="2">
    <location>
        <begin position="118"/>
        <end position="138"/>
    </location>
</feature>
<feature type="transmembrane region" description="Helical" evidence="2">
    <location>
        <begin position="167"/>
        <end position="187"/>
    </location>
</feature>
<feature type="transmembrane region" description="Helical" evidence="2">
    <location>
        <begin position="207"/>
        <end position="227"/>
    </location>
</feature>
<feature type="transmembrane region" description="Helical" evidence="2">
    <location>
        <begin position="241"/>
        <end position="261"/>
    </location>
</feature>
<feature type="transmembrane region" description="Helical" evidence="2">
    <location>
        <begin position="273"/>
        <end position="293"/>
    </location>
</feature>
<feature type="transmembrane region" description="Helical" evidence="2">
    <location>
        <begin position="300"/>
        <end position="320"/>
    </location>
</feature>
<feature type="transmembrane region" description="Helical" evidence="2">
    <location>
        <begin position="331"/>
        <end position="351"/>
    </location>
</feature>
<feature type="transmembrane region" description="Helical" evidence="2">
    <location>
        <begin position="387"/>
        <end position="407"/>
    </location>
</feature>
<feature type="transmembrane region" description="Helical" evidence="2">
    <location>
        <begin position="424"/>
        <end position="444"/>
    </location>
</feature>
<feature type="transmembrane region" description="Helical" evidence="2">
    <location>
        <begin position="472"/>
        <end position="492"/>
    </location>
</feature>
<feature type="transmembrane region" description="Helical" evidence="2">
    <location>
        <begin position="527"/>
        <end position="547"/>
    </location>
</feature>
<feature type="transmembrane region" description="Helical" evidence="2">
    <location>
        <begin position="595"/>
        <end position="615"/>
    </location>
</feature>
<feature type="transmembrane region" description="Helical" evidence="2">
    <location>
        <begin position="627"/>
        <end position="647"/>
    </location>
</feature>
<feature type="transmembrane region" description="Helical" evidence="2">
    <location>
        <begin position="651"/>
        <end position="671"/>
    </location>
</feature>
<feature type="transmembrane region" description="Helical" evidence="2">
    <location>
        <begin position="676"/>
        <end position="696"/>
    </location>
</feature>
<feature type="transmembrane region" description="Helical" evidence="2">
    <location>
        <begin position="712"/>
        <end position="732"/>
    </location>
</feature>
<feature type="transmembrane region" description="Helical" evidence="2">
    <location>
        <begin position="768"/>
        <end position="788"/>
    </location>
</feature>
<comment type="subunit">
    <text evidence="1">May form a heterooligomeric complex that consists of seven subunits: mnhA2, mnhB2, mnhC2, mnhD2, mnhE2, mnhF2 and mnhG2.</text>
</comment>
<comment type="subcellular location">
    <subcellularLocation>
        <location evidence="3">Cell membrane</location>
        <topology evidence="3">Multi-pass membrane protein</topology>
    </subcellularLocation>
</comment>
<comment type="similarity">
    <text evidence="3">Belongs to the CPA3 antiporters (TC 2.A.63) subunit A family.</text>
</comment>
<keyword id="KW-0050">Antiport</keyword>
<keyword id="KW-1003">Cell membrane</keyword>
<keyword id="KW-0406">Ion transport</keyword>
<keyword id="KW-0472">Membrane</keyword>
<keyword id="KW-0812">Transmembrane</keyword>
<keyword id="KW-1133">Transmembrane helix</keyword>
<keyword id="KW-0813">Transport</keyword>
<name>MNHA2_STAA1</name>
<dbReference type="EMBL" id="AP009324">
    <property type="protein sequence ID" value="BAF77502.1"/>
    <property type="molecule type" value="Genomic_DNA"/>
</dbReference>
<dbReference type="RefSeq" id="WP_000060771.1">
    <property type="nucleotide sequence ID" value="NC_009782.1"/>
</dbReference>
<dbReference type="SMR" id="A7WZ76"/>
<dbReference type="KEGG" id="saw:SAHV_0619"/>
<dbReference type="HOGENOM" id="CLU_007100_2_1_9"/>
<dbReference type="GO" id="GO:0005886">
    <property type="term" value="C:plasma membrane"/>
    <property type="evidence" value="ECO:0007669"/>
    <property type="project" value="UniProtKB-SubCell"/>
</dbReference>
<dbReference type="GO" id="GO:0015297">
    <property type="term" value="F:antiporter activity"/>
    <property type="evidence" value="ECO:0007669"/>
    <property type="project" value="UniProtKB-KW"/>
</dbReference>
<dbReference type="GO" id="GO:0006811">
    <property type="term" value="P:monoatomic ion transport"/>
    <property type="evidence" value="ECO:0007669"/>
    <property type="project" value="UniProtKB-KW"/>
</dbReference>
<dbReference type="InterPro" id="IPR050616">
    <property type="entry name" value="CPA3_Na-H_Antiporter_A"/>
</dbReference>
<dbReference type="InterPro" id="IPR025383">
    <property type="entry name" value="MrpA_C/MbhD"/>
</dbReference>
<dbReference type="InterPro" id="IPR046806">
    <property type="entry name" value="MrpA_C/MbhE"/>
</dbReference>
<dbReference type="InterPro" id="IPR001750">
    <property type="entry name" value="ND/Mrp_TM"/>
</dbReference>
<dbReference type="InterPro" id="IPR001516">
    <property type="entry name" value="Proton_antipo_N"/>
</dbReference>
<dbReference type="NCBIfam" id="NF009286">
    <property type="entry name" value="PRK12646.1"/>
    <property type="match status" value="1"/>
</dbReference>
<dbReference type="PANTHER" id="PTHR43373">
    <property type="entry name" value="NA(+)/H(+) ANTIPORTER SUBUNIT"/>
    <property type="match status" value="1"/>
</dbReference>
<dbReference type="PANTHER" id="PTHR43373:SF1">
    <property type="entry name" value="NA(+)_H(+) ANTIPORTER SUBUNIT A"/>
    <property type="match status" value="1"/>
</dbReference>
<dbReference type="Pfam" id="PF13244">
    <property type="entry name" value="MbhD"/>
    <property type="match status" value="1"/>
</dbReference>
<dbReference type="Pfam" id="PF20501">
    <property type="entry name" value="MbhE"/>
    <property type="match status" value="1"/>
</dbReference>
<dbReference type="Pfam" id="PF00361">
    <property type="entry name" value="Proton_antipo_M"/>
    <property type="match status" value="1"/>
</dbReference>
<dbReference type="Pfam" id="PF00662">
    <property type="entry name" value="Proton_antipo_N"/>
    <property type="match status" value="1"/>
</dbReference>
<dbReference type="PRINTS" id="PR01434">
    <property type="entry name" value="NADHDHGNASE5"/>
</dbReference>